<accession>A5UHB9</accession>
<keyword id="KW-0488">Methylation</keyword>
<keyword id="KW-0687">Ribonucleoprotein</keyword>
<keyword id="KW-0689">Ribosomal protein</keyword>
<keyword id="KW-0694">RNA-binding</keyword>
<keyword id="KW-0699">rRNA-binding</keyword>
<keyword id="KW-0820">tRNA-binding</keyword>
<sequence length="124" mass="13749">MATINQLVRKPRVKKVVKSNVPALEACPQKRGVCTRVYTTTPKKPNSALRKVCRIRLTNGFEVTSYIGGEGHNLQEHSVVLIRGGRVKDLPGVRYHTVRGALDCAGVKDRKQGRSKYGVKRPKA</sequence>
<gene>
    <name evidence="2" type="primary">rpsL</name>
    <name type="ordered locus">CGSHiGG_06390</name>
</gene>
<reference key="1">
    <citation type="journal article" date="2007" name="Genome Biol.">
        <title>Characterization and modeling of the Haemophilus influenzae core and supragenomes based on the complete genomic sequences of Rd and 12 clinical nontypeable strains.</title>
        <authorList>
            <person name="Hogg J.S."/>
            <person name="Hu F.Z."/>
            <person name="Janto B."/>
            <person name="Boissy R."/>
            <person name="Hayes J."/>
            <person name="Keefe R."/>
            <person name="Post J.C."/>
            <person name="Ehrlich G.D."/>
        </authorList>
    </citation>
    <scope>NUCLEOTIDE SEQUENCE [LARGE SCALE GENOMIC DNA]</scope>
    <source>
        <strain>PittGG</strain>
    </source>
</reference>
<protein>
    <recommendedName>
        <fullName evidence="2">Small ribosomal subunit protein uS12</fullName>
    </recommendedName>
    <alternativeName>
        <fullName evidence="3">30S ribosomal protein S12</fullName>
    </alternativeName>
</protein>
<organism>
    <name type="scientific">Haemophilus influenzae (strain PittGG)</name>
    <dbReference type="NCBI Taxonomy" id="374931"/>
    <lineage>
        <taxon>Bacteria</taxon>
        <taxon>Pseudomonadati</taxon>
        <taxon>Pseudomonadota</taxon>
        <taxon>Gammaproteobacteria</taxon>
        <taxon>Pasteurellales</taxon>
        <taxon>Pasteurellaceae</taxon>
        <taxon>Haemophilus</taxon>
    </lineage>
</organism>
<proteinExistence type="inferred from homology"/>
<name>RS12_HAEIG</name>
<evidence type="ECO:0000250" key="1"/>
<evidence type="ECO:0000255" key="2">
    <source>
        <dbReference type="HAMAP-Rule" id="MF_00403"/>
    </source>
</evidence>
<evidence type="ECO:0000305" key="3"/>
<feature type="chain" id="PRO_1000049787" description="Small ribosomal subunit protein uS12">
    <location>
        <begin position="1"/>
        <end position="124"/>
    </location>
</feature>
<feature type="modified residue" description="3-methylthioaspartic acid" evidence="1">
    <location>
        <position position="89"/>
    </location>
</feature>
<dbReference type="EMBL" id="CP000672">
    <property type="protein sequence ID" value="ABR00175.1"/>
    <property type="molecule type" value="Genomic_DNA"/>
</dbReference>
<dbReference type="SMR" id="A5UHB9"/>
<dbReference type="KEGG" id="hiq:CGSHiGG_06390"/>
<dbReference type="HOGENOM" id="CLU_104295_1_2_6"/>
<dbReference type="Proteomes" id="UP000001990">
    <property type="component" value="Chromosome"/>
</dbReference>
<dbReference type="GO" id="GO:0015935">
    <property type="term" value="C:small ribosomal subunit"/>
    <property type="evidence" value="ECO:0007669"/>
    <property type="project" value="InterPro"/>
</dbReference>
<dbReference type="GO" id="GO:0019843">
    <property type="term" value="F:rRNA binding"/>
    <property type="evidence" value="ECO:0007669"/>
    <property type="project" value="UniProtKB-UniRule"/>
</dbReference>
<dbReference type="GO" id="GO:0003735">
    <property type="term" value="F:structural constituent of ribosome"/>
    <property type="evidence" value="ECO:0007669"/>
    <property type="project" value="InterPro"/>
</dbReference>
<dbReference type="GO" id="GO:0000049">
    <property type="term" value="F:tRNA binding"/>
    <property type="evidence" value="ECO:0007669"/>
    <property type="project" value="UniProtKB-UniRule"/>
</dbReference>
<dbReference type="GO" id="GO:0006412">
    <property type="term" value="P:translation"/>
    <property type="evidence" value="ECO:0007669"/>
    <property type="project" value="UniProtKB-UniRule"/>
</dbReference>
<dbReference type="CDD" id="cd03368">
    <property type="entry name" value="Ribosomal_S12"/>
    <property type="match status" value="1"/>
</dbReference>
<dbReference type="FunFam" id="2.40.50.140:FF:000001">
    <property type="entry name" value="30S ribosomal protein S12"/>
    <property type="match status" value="1"/>
</dbReference>
<dbReference type="Gene3D" id="2.40.50.140">
    <property type="entry name" value="Nucleic acid-binding proteins"/>
    <property type="match status" value="1"/>
</dbReference>
<dbReference type="HAMAP" id="MF_00403_B">
    <property type="entry name" value="Ribosomal_uS12_B"/>
    <property type="match status" value="1"/>
</dbReference>
<dbReference type="InterPro" id="IPR012340">
    <property type="entry name" value="NA-bd_OB-fold"/>
</dbReference>
<dbReference type="InterPro" id="IPR006032">
    <property type="entry name" value="Ribosomal_uS12"/>
</dbReference>
<dbReference type="InterPro" id="IPR005679">
    <property type="entry name" value="Ribosomal_uS12_bac"/>
</dbReference>
<dbReference type="NCBIfam" id="TIGR00981">
    <property type="entry name" value="rpsL_bact"/>
    <property type="match status" value="1"/>
</dbReference>
<dbReference type="PANTHER" id="PTHR11652">
    <property type="entry name" value="30S RIBOSOMAL PROTEIN S12 FAMILY MEMBER"/>
    <property type="match status" value="1"/>
</dbReference>
<dbReference type="Pfam" id="PF00164">
    <property type="entry name" value="Ribosom_S12_S23"/>
    <property type="match status" value="1"/>
</dbReference>
<dbReference type="PIRSF" id="PIRSF002133">
    <property type="entry name" value="Ribosomal_S12/S23"/>
    <property type="match status" value="1"/>
</dbReference>
<dbReference type="PRINTS" id="PR01034">
    <property type="entry name" value="RIBOSOMALS12"/>
</dbReference>
<dbReference type="SUPFAM" id="SSF50249">
    <property type="entry name" value="Nucleic acid-binding proteins"/>
    <property type="match status" value="1"/>
</dbReference>
<dbReference type="PROSITE" id="PS00055">
    <property type="entry name" value="RIBOSOMAL_S12"/>
    <property type="match status" value="1"/>
</dbReference>
<comment type="function">
    <text evidence="2">With S4 and S5 plays an important role in translational accuracy.</text>
</comment>
<comment type="function">
    <text evidence="2">Interacts with and stabilizes bases of the 16S rRNA that are involved in tRNA selection in the A site and with the mRNA backbone. Located at the interface of the 30S and 50S subunits, it traverses the body of the 30S subunit contacting proteins on the other side and probably holding the rRNA structure together. The combined cluster of proteins S8, S12 and S17 appears to hold together the shoulder and platform of the 30S subunit.</text>
</comment>
<comment type="subunit">
    <text evidence="2">Part of the 30S ribosomal subunit. Contacts proteins S8 and S17. May interact with IF1 in the 30S initiation complex.</text>
</comment>
<comment type="similarity">
    <text evidence="2">Belongs to the universal ribosomal protein uS12 family.</text>
</comment>